<gene>
    <name evidence="1" type="primary">rimM</name>
    <name type="ordered locus">PSEEN4259</name>
</gene>
<reference key="1">
    <citation type="journal article" date="2006" name="Nat. Biotechnol.">
        <title>Complete genome sequence of the entomopathogenic and metabolically versatile soil bacterium Pseudomonas entomophila.</title>
        <authorList>
            <person name="Vodovar N."/>
            <person name="Vallenet D."/>
            <person name="Cruveiller S."/>
            <person name="Rouy Z."/>
            <person name="Barbe V."/>
            <person name="Acosta C."/>
            <person name="Cattolico L."/>
            <person name="Jubin C."/>
            <person name="Lajus A."/>
            <person name="Segurens B."/>
            <person name="Vacherie B."/>
            <person name="Wincker P."/>
            <person name="Weissenbach J."/>
            <person name="Lemaitre B."/>
            <person name="Medigue C."/>
            <person name="Boccard F."/>
        </authorList>
    </citation>
    <scope>NUCLEOTIDE SEQUENCE [LARGE SCALE GENOMIC DNA]</scope>
    <source>
        <strain>L48</strain>
    </source>
</reference>
<dbReference type="EMBL" id="CT573326">
    <property type="protein sequence ID" value="CAK16946.1"/>
    <property type="molecule type" value="Genomic_DNA"/>
</dbReference>
<dbReference type="RefSeq" id="WP_011535317.1">
    <property type="nucleotide sequence ID" value="NC_008027.1"/>
</dbReference>
<dbReference type="SMR" id="Q1I5Y9"/>
<dbReference type="STRING" id="384676.PSEEN4259"/>
<dbReference type="GeneID" id="32807264"/>
<dbReference type="KEGG" id="pen:PSEEN4259"/>
<dbReference type="eggNOG" id="COG0806">
    <property type="taxonomic scope" value="Bacteria"/>
</dbReference>
<dbReference type="HOGENOM" id="CLU_077636_1_0_6"/>
<dbReference type="OrthoDB" id="9783509at2"/>
<dbReference type="Proteomes" id="UP000000658">
    <property type="component" value="Chromosome"/>
</dbReference>
<dbReference type="GO" id="GO:0005737">
    <property type="term" value="C:cytoplasm"/>
    <property type="evidence" value="ECO:0007669"/>
    <property type="project" value="UniProtKB-SubCell"/>
</dbReference>
<dbReference type="GO" id="GO:0005840">
    <property type="term" value="C:ribosome"/>
    <property type="evidence" value="ECO:0007669"/>
    <property type="project" value="InterPro"/>
</dbReference>
<dbReference type="GO" id="GO:0043022">
    <property type="term" value="F:ribosome binding"/>
    <property type="evidence" value="ECO:0007669"/>
    <property type="project" value="InterPro"/>
</dbReference>
<dbReference type="GO" id="GO:0042274">
    <property type="term" value="P:ribosomal small subunit biogenesis"/>
    <property type="evidence" value="ECO:0007669"/>
    <property type="project" value="UniProtKB-UniRule"/>
</dbReference>
<dbReference type="GO" id="GO:0006364">
    <property type="term" value="P:rRNA processing"/>
    <property type="evidence" value="ECO:0007669"/>
    <property type="project" value="UniProtKB-UniRule"/>
</dbReference>
<dbReference type="Gene3D" id="2.30.30.240">
    <property type="entry name" value="PRC-barrel domain"/>
    <property type="match status" value="1"/>
</dbReference>
<dbReference type="Gene3D" id="2.40.30.60">
    <property type="entry name" value="RimM"/>
    <property type="match status" value="1"/>
</dbReference>
<dbReference type="HAMAP" id="MF_00014">
    <property type="entry name" value="Ribosome_mat_RimM"/>
    <property type="match status" value="1"/>
</dbReference>
<dbReference type="InterPro" id="IPR011033">
    <property type="entry name" value="PRC_barrel-like_sf"/>
</dbReference>
<dbReference type="InterPro" id="IPR056792">
    <property type="entry name" value="PRC_RimM"/>
</dbReference>
<dbReference type="InterPro" id="IPR011961">
    <property type="entry name" value="RimM"/>
</dbReference>
<dbReference type="InterPro" id="IPR002676">
    <property type="entry name" value="RimM_N"/>
</dbReference>
<dbReference type="InterPro" id="IPR036976">
    <property type="entry name" value="RimM_N_sf"/>
</dbReference>
<dbReference type="InterPro" id="IPR009000">
    <property type="entry name" value="Transl_B-barrel_sf"/>
</dbReference>
<dbReference type="NCBIfam" id="TIGR02273">
    <property type="entry name" value="16S_RimM"/>
    <property type="match status" value="1"/>
</dbReference>
<dbReference type="PANTHER" id="PTHR33692">
    <property type="entry name" value="RIBOSOME MATURATION FACTOR RIMM"/>
    <property type="match status" value="1"/>
</dbReference>
<dbReference type="PANTHER" id="PTHR33692:SF1">
    <property type="entry name" value="RIBOSOME MATURATION FACTOR RIMM"/>
    <property type="match status" value="1"/>
</dbReference>
<dbReference type="Pfam" id="PF24986">
    <property type="entry name" value="PRC_RimM"/>
    <property type="match status" value="1"/>
</dbReference>
<dbReference type="Pfam" id="PF01782">
    <property type="entry name" value="RimM"/>
    <property type="match status" value="1"/>
</dbReference>
<dbReference type="SUPFAM" id="SSF50346">
    <property type="entry name" value="PRC-barrel domain"/>
    <property type="match status" value="1"/>
</dbReference>
<dbReference type="SUPFAM" id="SSF50447">
    <property type="entry name" value="Translation proteins"/>
    <property type="match status" value="1"/>
</dbReference>
<sequence length="178" mass="19977">MNATPEKADDLIVVGKIFSVHGVRGEVKVYSFTDPIENLLDYPRWTLRHEGKVKQVELVSGRGSQKGLVVKLKGLDDRDEARLLSGHEICISRSLLPNLATDEYYWYQLVGLKVINQDEHLFGKIDHLLETGANDVLVVKPCAGSLDDRERLLPYTGQCVLAVDLEAGVMRVEWDADF</sequence>
<protein>
    <recommendedName>
        <fullName evidence="1">Ribosome maturation factor RimM</fullName>
    </recommendedName>
</protein>
<evidence type="ECO:0000255" key="1">
    <source>
        <dbReference type="HAMAP-Rule" id="MF_00014"/>
    </source>
</evidence>
<proteinExistence type="inferred from homology"/>
<organism>
    <name type="scientific">Pseudomonas entomophila (strain L48)</name>
    <dbReference type="NCBI Taxonomy" id="384676"/>
    <lineage>
        <taxon>Bacteria</taxon>
        <taxon>Pseudomonadati</taxon>
        <taxon>Pseudomonadota</taxon>
        <taxon>Gammaproteobacteria</taxon>
        <taxon>Pseudomonadales</taxon>
        <taxon>Pseudomonadaceae</taxon>
        <taxon>Pseudomonas</taxon>
    </lineage>
</organism>
<feature type="chain" id="PRO_1000001217" description="Ribosome maturation factor RimM">
    <location>
        <begin position="1"/>
        <end position="178"/>
    </location>
</feature>
<feature type="domain" description="PRC barrel" evidence="1">
    <location>
        <begin position="101"/>
        <end position="178"/>
    </location>
</feature>
<comment type="function">
    <text evidence="1">An accessory protein needed during the final step in the assembly of 30S ribosomal subunit, possibly for assembly of the head region. Essential for efficient processing of 16S rRNA. May be needed both before and after RbfA during the maturation of 16S rRNA. It has affinity for free ribosomal 30S subunits but not for 70S ribosomes.</text>
</comment>
<comment type="subunit">
    <text evidence="1">Binds ribosomal protein uS19.</text>
</comment>
<comment type="subcellular location">
    <subcellularLocation>
        <location evidence="1">Cytoplasm</location>
    </subcellularLocation>
</comment>
<comment type="domain">
    <text evidence="1">The PRC barrel domain binds ribosomal protein uS19.</text>
</comment>
<comment type="similarity">
    <text evidence="1">Belongs to the RimM family.</text>
</comment>
<accession>Q1I5Y9</accession>
<keyword id="KW-0143">Chaperone</keyword>
<keyword id="KW-0963">Cytoplasm</keyword>
<keyword id="KW-0690">Ribosome biogenesis</keyword>
<keyword id="KW-0698">rRNA processing</keyword>
<name>RIMM_PSEE4</name>